<proteinExistence type="predicted"/>
<keyword id="KW-0175">Coiled coil</keyword>
<keyword id="KW-1185">Reference proteome</keyword>
<gene>
    <name type="ordered locus">At2g33490</name>
    <name type="ORF">F4P9.26</name>
</gene>
<evidence type="ECO:0000255" key="1"/>
<evidence type="ECO:0000256" key="2">
    <source>
        <dbReference type="SAM" id="MobiDB-lite"/>
    </source>
</evidence>
<evidence type="ECO:0000305" key="3"/>
<name>Y2349_ARATH</name>
<protein>
    <recommendedName>
        <fullName>Uncharacterized protein At2g33490</fullName>
    </recommendedName>
</protein>
<dbReference type="EMBL" id="AC002332">
    <property type="protein sequence ID" value="AAB80666.1"/>
    <property type="status" value="ALT_SEQ"/>
    <property type="molecule type" value="Genomic_DNA"/>
</dbReference>
<dbReference type="EMBL" id="CP002685">
    <property type="protein sequence ID" value="AEC08842.1"/>
    <property type="molecule type" value="Genomic_DNA"/>
</dbReference>
<dbReference type="EMBL" id="CP002685">
    <property type="protein sequence ID" value="ANM61687.1"/>
    <property type="molecule type" value="Genomic_DNA"/>
</dbReference>
<dbReference type="PIR" id="B84746">
    <property type="entry name" value="B84746"/>
</dbReference>
<dbReference type="RefSeq" id="NP_001323890.1">
    <property type="nucleotide sequence ID" value="NM_001336456.1"/>
</dbReference>
<dbReference type="RefSeq" id="NP_180907.2">
    <property type="nucleotide sequence ID" value="NM_128909.3"/>
</dbReference>
<dbReference type="SMR" id="O22799"/>
<dbReference type="FunCoup" id="O22799">
    <property type="interactions" value="1885"/>
</dbReference>
<dbReference type="STRING" id="3702.O22799"/>
<dbReference type="iPTMnet" id="O22799"/>
<dbReference type="PaxDb" id="3702-AT2G33490.1"/>
<dbReference type="ProteomicsDB" id="242859"/>
<dbReference type="EnsemblPlants" id="AT2G33490.1">
    <property type="protein sequence ID" value="AT2G33490.1"/>
    <property type="gene ID" value="AT2G33490"/>
</dbReference>
<dbReference type="EnsemblPlants" id="AT2G33490.2">
    <property type="protein sequence ID" value="AT2G33490.2"/>
    <property type="gene ID" value="AT2G33490"/>
</dbReference>
<dbReference type="GeneID" id="817914"/>
<dbReference type="Gramene" id="AT2G33490.1">
    <property type="protein sequence ID" value="AT2G33490.1"/>
    <property type="gene ID" value="AT2G33490"/>
</dbReference>
<dbReference type="Gramene" id="AT2G33490.2">
    <property type="protein sequence ID" value="AT2G33490.2"/>
    <property type="gene ID" value="AT2G33490"/>
</dbReference>
<dbReference type="KEGG" id="ath:AT2G33490"/>
<dbReference type="Araport" id="AT2G33490"/>
<dbReference type="TAIR" id="AT2G33490"/>
<dbReference type="eggNOG" id="ENOG502QQ6Z">
    <property type="taxonomic scope" value="Eukaryota"/>
</dbReference>
<dbReference type="HOGENOM" id="CLU_021999_1_0_1"/>
<dbReference type="InParanoid" id="O22799"/>
<dbReference type="PhylomeDB" id="O22799"/>
<dbReference type="PRO" id="PR:O22799"/>
<dbReference type="Proteomes" id="UP000006548">
    <property type="component" value="Chromosome 2"/>
</dbReference>
<dbReference type="ExpressionAtlas" id="O22799">
    <property type="expression patterns" value="baseline and differential"/>
</dbReference>
<dbReference type="CDD" id="cd07307">
    <property type="entry name" value="BAR"/>
    <property type="match status" value="1"/>
</dbReference>
<dbReference type="FunFam" id="1.20.1270.60:FF:000095">
    <property type="entry name" value="Hydroxyproline-rich glycoprotein family protein"/>
    <property type="match status" value="1"/>
</dbReference>
<dbReference type="Gene3D" id="1.20.1270.60">
    <property type="entry name" value="Arfaptin homology (AH) domain/BAR domain"/>
    <property type="match status" value="1"/>
</dbReference>
<dbReference type="InterPro" id="IPR027267">
    <property type="entry name" value="AH/BAR_dom_sf"/>
</dbReference>
<dbReference type="InterPro" id="IPR037488">
    <property type="entry name" value="At2g33490-like"/>
</dbReference>
<dbReference type="PANTHER" id="PTHR34119">
    <property type="entry name" value="HYDROXYPROLINE-RICH GLYCOPROTEIN-LIKE"/>
    <property type="match status" value="1"/>
</dbReference>
<dbReference type="PANTHER" id="PTHR34119:SF1">
    <property type="entry name" value="OS04G0394700 PROTEIN"/>
    <property type="match status" value="1"/>
</dbReference>
<dbReference type="SUPFAM" id="SSF103657">
    <property type="entry name" value="BAR/IMD domain-like"/>
    <property type="match status" value="1"/>
</dbReference>
<accession>O22799</accession>
<comment type="sequence caution" evidence="3">
    <conflict type="erroneous gene model prediction">
        <sequence resource="EMBL-CDS" id="AAB80666"/>
    </conflict>
</comment>
<reference key="1">
    <citation type="journal article" date="1999" name="Nature">
        <title>Sequence and analysis of chromosome 2 of the plant Arabidopsis thaliana.</title>
        <authorList>
            <person name="Lin X."/>
            <person name="Kaul S."/>
            <person name="Rounsley S.D."/>
            <person name="Shea T.P."/>
            <person name="Benito M.-I."/>
            <person name="Town C.D."/>
            <person name="Fujii C.Y."/>
            <person name="Mason T.M."/>
            <person name="Bowman C.L."/>
            <person name="Barnstead M.E."/>
            <person name="Feldblyum T.V."/>
            <person name="Buell C.R."/>
            <person name="Ketchum K.A."/>
            <person name="Lee J.J."/>
            <person name="Ronning C.M."/>
            <person name="Koo H.L."/>
            <person name="Moffat K.S."/>
            <person name="Cronin L.A."/>
            <person name="Shen M."/>
            <person name="Pai G."/>
            <person name="Van Aken S."/>
            <person name="Umayam L."/>
            <person name="Tallon L.J."/>
            <person name="Gill J.E."/>
            <person name="Adams M.D."/>
            <person name="Carrera A.J."/>
            <person name="Creasy T.H."/>
            <person name="Goodman H.M."/>
            <person name="Somerville C.R."/>
            <person name="Copenhaver G.P."/>
            <person name="Preuss D."/>
            <person name="Nierman W.C."/>
            <person name="White O."/>
            <person name="Eisen J.A."/>
            <person name="Salzberg S.L."/>
            <person name="Fraser C.M."/>
            <person name="Venter J.C."/>
        </authorList>
    </citation>
    <scope>NUCLEOTIDE SEQUENCE [LARGE SCALE GENOMIC DNA]</scope>
    <source>
        <strain>cv. Columbia</strain>
    </source>
</reference>
<reference key="2">
    <citation type="journal article" date="2017" name="Plant J.">
        <title>Araport11: a complete reannotation of the Arabidopsis thaliana reference genome.</title>
        <authorList>
            <person name="Cheng C.Y."/>
            <person name="Krishnakumar V."/>
            <person name="Chan A.P."/>
            <person name="Thibaud-Nissen F."/>
            <person name="Schobel S."/>
            <person name="Town C.D."/>
        </authorList>
    </citation>
    <scope>GENOME REANNOTATION</scope>
    <source>
        <strain>cv. Columbia</strain>
    </source>
</reference>
<sequence>MKTSLRRLRGVLHKHESKDRRDLRALVQKDELAQASQDVEDMRDCYDSLLNAAAATANSAYEFSESLRELGACLLEKTALNDDEESGRVLIMLGKLQFELQKLVDKYRSHIFQTITIPSESLLNELRIVEEMQRLCDEKRNVYEGMLTRQREKGRSKGGKGETFSPQQLQEAHDDYENETTLFVFRLKSLKQGQTRSLLTQAARHHAAQLCFFKKALSSLEEVDPHVQMVTESQHIDYHFSGLEDDDGDDEIENNENDGSEVHDDGELSFEYRVNDKDQDADSSAGGSSELGNSDITFPQIGGPYTAQENEEGNYRKSHSFRRDVRAVSQSAPLFPENRTTPPSEKLLRMRSTLTRKFNTYALPTPVETTRSPSSTTSPGHKNVGSSNPTKAITKQIWYSSPLETRGPAKVSSRSMVALKEQVLRESNKNTSRLPPPLADGLLFSRLGTLKRRSFSGPLTSKPLPNKPLSTTSHLYSGPIPRNPVSKLPKVSSSPTASPTFVSTPKISELHELPRPPPRSSTKSSRELGYSAPLVSRSQLLSKPLITNSASPLPIPPAITRSFSIPTSNLRASDLDMSKTSLGTKKLGTPSPPLTPMSLIHPPPQALPERADHLMMSKQERRI</sequence>
<organism>
    <name type="scientific">Arabidopsis thaliana</name>
    <name type="common">Mouse-ear cress</name>
    <dbReference type="NCBI Taxonomy" id="3702"/>
    <lineage>
        <taxon>Eukaryota</taxon>
        <taxon>Viridiplantae</taxon>
        <taxon>Streptophyta</taxon>
        <taxon>Embryophyta</taxon>
        <taxon>Tracheophyta</taxon>
        <taxon>Spermatophyta</taxon>
        <taxon>Magnoliopsida</taxon>
        <taxon>eudicotyledons</taxon>
        <taxon>Gunneridae</taxon>
        <taxon>Pentapetalae</taxon>
        <taxon>rosids</taxon>
        <taxon>malvids</taxon>
        <taxon>Brassicales</taxon>
        <taxon>Brassicaceae</taxon>
        <taxon>Camelineae</taxon>
        <taxon>Arabidopsis</taxon>
    </lineage>
</organism>
<feature type="chain" id="PRO_0000315408" description="Uncharacterized protein At2g33490">
    <location>
        <begin position="1"/>
        <end position="623"/>
    </location>
</feature>
<feature type="region of interest" description="Disordered" evidence="2">
    <location>
        <begin position="148"/>
        <end position="170"/>
    </location>
</feature>
<feature type="region of interest" description="Disordered" evidence="2">
    <location>
        <begin position="240"/>
        <end position="343"/>
    </location>
</feature>
<feature type="region of interest" description="Disordered" evidence="2">
    <location>
        <begin position="362"/>
        <end position="393"/>
    </location>
</feature>
<feature type="region of interest" description="Disordered" evidence="2">
    <location>
        <begin position="454"/>
        <end position="531"/>
    </location>
</feature>
<feature type="region of interest" description="Disordered" evidence="2">
    <location>
        <begin position="585"/>
        <end position="607"/>
    </location>
</feature>
<feature type="coiled-coil region" evidence="1">
    <location>
        <begin position="24"/>
        <end position="51"/>
    </location>
</feature>
<feature type="compositionally biased region" description="Acidic residues" evidence="2">
    <location>
        <begin position="243"/>
        <end position="259"/>
    </location>
</feature>
<feature type="compositionally biased region" description="Polar residues" evidence="2">
    <location>
        <begin position="328"/>
        <end position="343"/>
    </location>
</feature>
<feature type="compositionally biased region" description="Low complexity" evidence="2">
    <location>
        <begin position="364"/>
        <end position="379"/>
    </location>
</feature>
<feature type="compositionally biased region" description="Polar residues" evidence="2">
    <location>
        <begin position="384"/>
        <end position="393"/>
    </location>
</feature>
<feature type="compositionally biased region" description="Low complexity" evidence="2">
    <location>
        <begin position="484"/>
        <end position="495"/>
    </location>
</feature>
<feature type="compositionally biased region" description="Polar residues" evidence="2">
    <location>
        <begin position="496"/>
        <end position="506"/>
    </location>
</feature>
<feature type="compositionally biased region" description="Pro residues" evidence="2">
    <location>
        <begin position="590"/>
        <end position="606"/>
    </location>
</feature>